<name>ORGRE_CUCME</name>
<keyword id="KW-0150">Chloroplast</keyword>
<keyword id="KW-0472">Membrane</keyword>
<keyword id="KW-0934">Plastid</keyword>
<keyword id="KW-1185">Reference proteome</keyword>
<keyword id="KW-0677">Repeat</keyword>
<keyword id="KW-0809">Transit peptide</keyword>
<keyword id="KW-0812">Transmembrane</keyword>
<keyword id="KW-1133">Transmembrane helix</keyword>
<protein>
    <recommendedName>
        <fullName evidence="5">Protein ORANGE-GREEN, chloroplastic</fullName>
        <shortName evidence="4">CmOr-green</shortName>
    </recommendedName>
    <alternativeName>
        <fullName evidence="4">DnaJ-like cysteine-rich domain-containing protein Or</fullName>
    </alternativeName>
</protein>
<sequence>MDRVLVASYPINHLIRPHSFRIDYCWSTCFTSRLNSGKERQKLSSRWRWRSMASDSTDSSSSSSFAPSVESDPSDKTSASFCIIEGPETVQDFAKMELQEIQENIRSRRNKIFLHMEEVRRLRIQQRIKNAELGISKEERENELPNFPSFIPFLPPLSSENLKLYYVTCYSLIAGIILFGGLLAPTLELKLGLGGTSYEDFIRSVHLPMQLSQVDPIVASFSGGAVGVISALMVVEVNNVKQQEHKRCKYCLGTGYLACARCSNTGALVLIEPVSTLNGEHQPLSLPKTERCQNCSGSGKVMCPTCLCTGMAMASEHDPRIDPFD</sequence>
<organism>
    <name type="scientific">Cucumis melo</name>
    <name type="common">Muskmelon</name>
    <dbReference type="NCBI Taxonomy" id="3656"/>
    <lineage>
        <taxon>Eukaryota</taxon>
        <taxon>Viridiplantae</taxon>
        <taxon>Streptophyta</taxon>
        <taxon>Embryophyta</taxon>
        <taxon>Tracheophyta</taxon>
        <taxon>Spermatophyta</taxon>
        <taxon>Magnoliopsida</taxon>
        <taxon>eudicotyledons</taxon>
        <taxon>Gunneridae</taxon>
        <taxon>Pentapetalae</taxon>
        <taxon>rosids</taxon>
        <taxon>fabids</taxon>
        <taxon>Cucurbitales</taxon>
        <taxon>Cucurbitaceae</taxon>
        <taxon>Benincaseae</taxon>
        <taxon>Cucumis</taxon>
    </lineage>
</organism>
<accession>A0A0D3MU35</accession>
<comment type="function">
    <text evidence="6">Involved in chloroplast differentiation in fruit flesh.</text>
</comment>
<comment type="subcellular location">
    <subcellularLocation>
        <location evidence="6">Plastid</location>
        <location evidence="6">Chloroplast membrane</location>
    </subcellularLocation>
</comment>
<comment type="developmental stage">
    <text evidence="3">Expression increases in fruit flesh during fruit development.</text>
</comment>
<comment type="polymorphism">
    <text evidence="6">The OR gene possesses two alleles in melon, one associated with orange flesh (AC A0A0D3MU50) and the second being associated with either white or green flesh (this entry). A single SNP between the two alleles causes a change of an evolutionarily highly conserved Arg in position 108 to His (AC A0A0D3MU50). The Arg and His alleles are responsible for the non-orange and orange melon fruit phenotypes, respectively. This findings could serve as a novel genetic tool to enrich carotenoid content in transgenic crops.</text>
</comment>
<comment type="miscellaneous">
    <text evidence="5">Its sequence is related to the DnaJ family but lacks the J domain. The CR-type-like region is similar to CR-type zinc-fingers.</text>
</comment>
<comment type="similarity">
    <text>Belongs to the orange-like family.</text>
</comment>
<proteinExistence type="evidence at transcript level"/>
<gene>
    <name evidence="4" type="primary">OR</name>
</gene>
<evidence type="ECO:0000255" key="1"/>
<evidence type="ECO:0000256" key="2">
    <source>
        <dbReference type="SAM" id="MobiDB-lite"/>
    </source>
</evidence>
<evidence type="ECO:0000269" key="3">
    <source>
    </source>
</evidence>
<evidence type="ECO:0000303" key="4">
    <source>
    </source>
</evidence>
<evidence type="ECO:0000305" key="5"/>
<evidence type="ECO:0000305" key="6">
    <source>
    </source>
</evidence>
<dbReference type="EMBL" id="KM505047">
    <property type="protein sequence ID" value="AIZ95445.1"/>
    <property type="molecule type" value="Genomic_DNA"/>
</dbReference>
<dbReference type="RefSeq" id="NP_001412408.1">
    <property type="nucleotide sequence ID" value="NM_001425479.1"/>
</dbReference>
<dbReference type="RefSeq" id="XP_008467325.1">
    <property type="nucleotide sequence ID" value="XM_008469103.2"/>
</dbReference>
<dbReference type="SMR" id="A0A0D3MU35"/>
<dbReference type="FunCoup" id="A0A0D3MU35">
    <property type="interactions" value="612"/>
</dbReference>
<dbReference type="GeneID" id="103504703"/>
<dbReference type="KEGG" id="cmo:103504703"/>
<dbReference type="eggNOG" id="ENOG502QVC3">
    <property type="taxonomic scope" value="Eukaryota"/>
</dbReference>
<dbReference type="InParanoid" id="A0A0D3MU35"/>
<dbReference type="PhylomeDB" id="A0A0D3MU35"/>
<dbReference type="Proteomes" id="UP000089565">
    <property type="component" value="Unplaced"/>
</dbReference>
<dbReference type="Proteomes" id="UP000596662">
    <property type="component" value="Unplaced"/>
</dbReference>
<dbReference type="GO" id="GO:0009507">
    <property type="term" value="C:chloroplast"/>
    <property type="evidence" value="ECO:0000314"/>
    <property type="project" value="UniProtKB"/>
</dbReference>
<dbReference type="GO" id="GO:0031969">
    <property type="term" value="C:chloroplast membrane"/>
    <property type="evidence" value="ECO:0007669"/>
    <property type="project" value="UniProtKB-SubCell"/>
</dbReference>
<dbReference type="PANTHER" id="PTHR15852:SF24">
    <property type="entry name" value="OS02G0651300 PROTEIN"/>
    <property type="match status" value="1"/>
</dbReference>
<dbReference type="PANTHER" id="PTHR15852">
    <property type="entry name" value="PLASTID TRANSCRIPTIONALLY ACTIVE PROTEIN"/>
    <property type="match status" value="1"/>
</dbReference>
<feature type="transit peptide" description="Chloroplast" evidence="1">
    <location>
        <begin position="1"/>
        <end position="54"/>
    </location>
</feature>
<feature type="chain" id="PRO_0000438015" description="Protein ORANGE-GREEN, chloroplastic">
    <location>
        <begin position="55"/>
        <end position="325"/>
    </location>
</feature>
<feature type="transmembrane region" description="Helical" evidence="1">
    <location>
        <begin position="164"/>
        <end position="184"/>
    </location>
</feature>
<feature type="transmembrane region" description="Helical" evidence="1">
    <location>
        <begin position="217"/>
        <end position="237"/>
    </location>
</feature>
<feature type="repeat" description="CXXCXGXG motif" evidence="5">
    <location>
        <begin position="248"/>
        <end position="255"/>
    </location>
</feature>
<feature type="repeat" description="CXXCXXXG motif" evidence="5">
    <location>
        <begin position="259"/>
        <end position="266"/>
    </location>
</feature>
<feature type="repeat" description="CXXCXGXG motif" evidence="5">
    <location>
        <begin position="292"/>
        <end position="299"/>
    </location>
</feature>
<feature type="repeat" description="CXXCXXXG motif" evidence="5">
    <location>
        <begin position="303"/>
        <end position="310"/>
    </location>
</feature>
<feature type="region of interest" description="Disordered" evidence="2">
    <location>
        <begin position="53"/>
        <end position="77"/>
    </location>
</feature>
<feature type="region of interest" description="CR-type-like" evidence="5">
    <location>
        <begin position="226"/>
        <end position="317"/>
    </location>
</feature>
<feature type="compositionally biased region" description="Low complexity" evidence="2">
    <location>
        <begin position="53"/>
        <end position="71"/>
    </location>
</feature>
<reference key="1">
    <citation type="journal article" date="2015" name="Plant J.">
        <title>A 'golden' SNP in CmOr governs the fruit flesh color of melon (Cucumis melo).</title>
        <authorList>
            <person name="Tzuri G."/>
            <person name="Zhou X."/>
            <person name="Chayut N."/>
            <person name="Yuan H."/>
            <person name="Portnoy V."/>
            <person name="Meir A."/>
            <person name="Sa'ar U."/>
            <person name="Baumkoler F."/>
            <person name="Mazourek M."/>
            <person name="Lewinsohn E."/>
            <person name="Fei Z."/>
            <person name="Schaffer A.A."/>
            <person name="Li L."/>
            <person name="Burger J."/>
            <person name="Katzir N."/>
            <person name="Tadmor Y."/>
        </authorList>
    </citation>
    <scope>NUCLEOTIDE SEQUENCE [GENOMIC DNA]</scope>
    <scope>FUNCTION</scope>
    <scope>SUBCELLULAR LOCATION</scope>
    <scope>DEVELOPMENTAL STAGE</scope>
    <scope>POLYMORPHISM</scope>
</reference>